<protein>
    <recommendedName>
        <fullName>Transcription factor SPT20 homolog</fullName>
    </recommendedName>
</protein>
<feature type="chain" id="PRO_0000187042" description="Transcription factor SPT20 homolog">
    <location>
        <begin position="1"/>
        <end position="530"/>
    </location>
</feature>
<feature type="region of interest" description="Disordered" evidence="4">
    <location>
        <begin position="419"/>
        <end position="530"/>
    </location>
</feature>
<feature type="compositionally biased region" description="Low complexity" evidence="4">
    <location>
        <begin position="424"/>
        <end position="436"/>
    </location>
</feature>
<feature type="compositionally biased region" description="Low complexity" evidence="4">
    <location>
        <begin position="466"/>
        <end position="475"/>
    </location>
</feature>
<feature type="compositionally biased region" description="Low complexity" evidence="4">
    <location>
        <begin position="514"/>
        <end position="530"/>
    </location>
</feature>
<feature type="modified residue" description="Phosphoserine" evidence="2">
    <location>
        <position position="296"/>
    </location>
</feature>
<feature type="modified residue" description="Phosphothreonine" evidence="3">
    <location>
        <position position="490"/>
    </location>
</feature>
<feature type="modified residue" description="Phosphoserine" evidence="3">
    <location>
        <position position="515"/>
    </location>
</feature>
<feature type="modified residue" description="Phosphoserine" evidence="2">
    <location>
        <position position="520"/>
    </location>
</feature>
<evidence type="ECO:0000250" key="1"/>
<evidence type="ECO:0000250" key="2">
    <source>
        <dbReference type="UniProtKB" id="Q7TT00"/>
    </source>
</evidence>
<evidence type="ECO:0000250" key="3">
    <source>
        <dbReference type="UniProtKB" id="Q8NEM7"/>
    </source>
</evidence>
<evidence type="ECO:0000256" key="4">
    <source>
        <dbReference type="SAM" id="MobiDB-lite"/>
    </source>
</evidence>
<evidence type="ECO:0000305" key="5"/>
<dbReference type="EMBL" id="BC081923">
    <property type="protein sequence ID" value="AAH81923.1"/>
    <property type="molecule type" value="mRNA"/>
</dbReference>
<dbReference type="RefSeq" id="NP_001014192.1">
    <property type="nucleotide sequence ID" value="NM_001014170.1"/>
</dbReference>
<dbReference type="RefSeq" id="XP_063138167.1">
    <property type="nucleotide sequence ID" value="XM_063282097.1"/>
</dbReference>
<dbReference type="RefSeq" id="XP_063138168.1">
    <property type="nucleotide sequence ID" value="XM_063282098.1"/>
</dbReference>
<dbReference type="SMR" id="Q66HC7"/>
<dbReference type="FunCoup" id="Q66HC7">
    <property type="interactions" value="3017"/>
</dbReference>
<dbReference type="STRING" id="10116.ENSRNOP00000075507"/>
<dbReference type="GlyGen" id="Q66HC7">
    <property type="glycosylation" value="1 site"/>
</dbReference>
<dbReference type="PhosphoSitePlus" id="Q66HC7"/>
<dbReference type="PaxDb" id="10116-ENSRNOP00000054835"/>
<dbReference type="GeneID" id="361946"/>
<dbReference type="UCSC" id="RGD:1307812">
    <property type="organism name" value="rat"/>
</dbReference>
<dbReference type="AGR" id="RGD:1307812"/>
<dbReference type="RGD" id="1307812">
    <property type="gene designation" value="Supt20h"/>
</dbReference>
<dbReference type="eggNOG" id="ENOG502QS30">
    <property type="taxonomic scope" value="Eukaryota"/>
</dbReference>
<dbReference type="InParanoid" id="Q66HC7"/>
<dbReference type="PhylomeDB" id="Q66HC7"/>
<dbReference type="PRO" id="PR:Q66HC7"/>
<dbReference type="Proteomes" id="UP000002494">
    <property type="component" value="Unplaced"/>
</dbReference>
<dbReference type="GO" id="GO:0000124">
    <property type="term" value="C:SAGA complex"/>
    <property type="evidence" value="ECO:0000318"/>
    <property type="project" value="GO_Central"/>
</dbReference>
<dbReference type="GO" id="GO:0070461">
    <property type="term" value="C:SAGA-type complex"/>
    <property type="evidence" value="ECO:0000266"/>
    <property type="project" value="RGD"/>
</dbReference>
<dbReference type="GO" id="GO:0003712">
    <property type="term" value="F:transcription coregulator activity"/>
    <property type="evidence" value="ECO:0000318"/>
    <property type="project" value="GO_Central"/>
</dbReference>
<dbReference type="GO" id="GO:0007369">
    <property type="term" value="P:gastrulation"/>
    <property type="evidence" value="ECO:0007669"/>
    <property type="project" value="UniProtKB-KW"/>
</dbReference>
<dbReference type="GO" id="GO:0045722">
    <property type="term" value="P:positive regulation of gluconeogenesis"/>
    <property type="evidence" value="ECO:0000266"/>
    <property type="project" value="RGD"/>
</dbReference>
<dbReference type="GO" id="GO:0045944">
    <property type="term" value="P:positive regulation of transcription by RNA polymerase II"/>
    <property type="evidence" value="ECO:0000266"/>
    <property type="project" value="RGD"/>
</dbReference>
<dbReference type="GO" id="GO:0006357">
    <property type="term" value="P:regulation of transcription by RNA polymerase II"/>
    <property type="evidence" value="ECO:0000318"/>
    <property type="project" value="GO_Central"/>
</dbReference>
<dbReference type="InterPro" id="IPR021950">
    <property type="entry name" value="Spt20"/>
</dbReference>
<dbReference type="InterPro" id="IPR046468">
    <property type="entry name" value="Spt20-like_SEP"/>
</dbReference>
<dbReference type="PANTHER" id="PTHR13526">
    <property type="entry name" value="TRANSCRIPTION FACTOR SPT20 HOMOLOG"/>
    <property type="match status" value="1"/>
</dbReference>
<dbReference type="PANTHER" id="PTHR13526:SF8">
    <property type="entry name" value="TRANSCRIPTION FACTOR SPT20 HOMOLOG"/>
    <property type="match status" value="1"/>
</dbReference>
<dbReference type="Pfam" id="PF12090">
    <property type="entry name" value="Spt20_SEP"/>
    <property type="match status" value="1"/>
</dbReference>
<name>SP20H_RAT</name>
<sequence>MQQALEQALDRAEYIVESAQQRPPKRKCLSSGRKSIFQKLYDLYVEECEKEPEVKKLRRNVNLLEKLVMQETLSCLVVNLYPGNEGYSLMLRGKNGSDSETIRLPYEEGELLEYLDAEELPPILVDLLEKSQVNIFHCGCVIAEIRDYRQSSNMKSPGYQSRHILLRPTMQTLVCDVHSITSDNHKWTQEDKLLLESQLILATAEPLCLDPSVAVACTANRLLYNRQKMNTRPMKRCLKRYSRSSLNRQQDLSHCPPPPQLRLLDFLQKRKERKAGQHYDLKISKAGNCVDMWKRSPCNLAVPSEVDVEKYAKVEKSIKSDDSQPTMWPAHDVKDDYVFECEGGNQYQKTKLTILQSLGDPLYYGKIQPWKADEESDSQMSPSHSSADDHSNWFIIGSKTDAERVVNQYQELVQNEAKCPVKMSHSSSGSASLNSGEEGEPETSSIQSSVLGKGVKHRPPPIKLPSSSGNSSSGNYFTAQQASSFLKSPTPPPPSSKPSLSRKSSVDLSQVSMLSPAALSPASSSQRHES</sequence>
<gene>
    <name type="primary">Supt20h</name>
    <name type="synonym">Fam48a</name>
    <name type="synonym">Supt20</name>
</gene>
<comment type="function">
    <text evidence="1">Required for MAP kinase p38 (MAPK11, MAPK12, MAPK13 and/or MAPK14) activation during gastrulation. Required for down-regulation of E-cadherin during gastrulation by regulating E-cadherin protein level downstream from NCK-interacting kinase (NIK) and independently of the regulation of transcription by FGF signaling and Snail. Required for starvation-induced ATG9A trafficking during autophagy (By similarity).</text>
</comment>
<comment type="subunit">
    <text evidence="1">Interacts with ATG9A. Interacts with MAPK14 (By similarity).</text>
</comment>
<comment type="similarity">
    <text evidence="5">Belongs to the SPT20 family.</text>
</comment>
<keyword id="KW-0217">Developmental protein</keyword>
<keyword id="KW-0306">Gastrulation</keyword>
<keyword id="KW-0597">Phosphoprotein</keyword>
<keyword id="KW-1185">Reference proteome</keyword>
<accession>Q66HC7</accession>
<reference key="1">
    <citation type="journal article" date="2004" name="Genome Res.">
        <title>The status, quality, and expansion of the NIH full-length cDNA project: the Mammalian Gene Collection (MGC).</title>
        <authorList>
            <consortium name="The MGC Project Team"/>
        </authorList>
    </citation>
    <scope>NUCLEOTIDE SEQUENCE [LARGE SCALE MRNA]</scope>
    <source>
        <tissue>Testis</tissue>
    </source>
</reference>
<organism>
    <name type="scientific">Rattus norvegicus</name>
    <name type="common">Rat</name>
    <dbReference type="NCBI Taxonomy" id="10116"/>
    <lineage>
        <taxon>Eukaryota</taxon>
        <taxon>Metazoa</taxon>
        <taxon>Chordata</taxon>
        <taxon>Craniata</taxon>
        <taxon>Vertebrata</taxon>
        <taxon>Euteleostomi</taxon>
        <taxon>Mammalia</taxon>
        <taxon>Eutheria</taxon>
        <taxon>Euarchontoglires</taxon>
        <taxon>Glires</taxon>
        <taxon>Rodentia</taxon>
        <taxon>Myomorpha</taxon>
        <taxon>Muroidea</taxon>
        <taxon>Muridae</taxon>
        <taxon>Murinae</taxon>
        <taxon>Rattus</taxon>
    </lineage>
</organism>
<proteinExistence type="evidence at transcript level"/>